<proteinExistence type="inferred from homology"/>
<sequence>MQKVLAIVGPTAIGKTDLAISLAQKLNGEIISGDSMQVYQEVEVGTAKATKEEQAKVKHYLVDNRSVFDEYSVKDFVDEAKKAISEVAKKGKLPILVGGTGFYVNALLNEMQLGERNDEERGTSQKWEDYLKENGAEKLWQILNEKDPTAAAKIPVPNSRRTMRALTVIDRTGKKFSEQQKKIKPRYDYLIIGLNSDRQEIYRRINLRVDKMMGKGMLEEAKFIYDNRDKEHQILQAIAYKEFFPYFDGEKSLEDCVTQLKTASRRYAKRQLTYFRNQLPIQWFDPLNDLECEQKIINKVREWENG</sequence>
<comment type="function">
    <text evidence="1">Catalyzes the transfer of a dimethylallyl group onto the adenine at position 37 in tRNAs that read codons beginning with uridine, leading to the formation of N6-(dimethylallyl)adenosine (i(6)A).</text>
</comment>
<comment type="catalytic activity">
    <reaction evidence="1">
        <text>adenosine(37) in tRNA + dimethylallyl diphosphate = N(6)-dimethylallyladenosine(37) in tRNA + diphosphate</text>
        <dbReference type="Rhea" id="RHEA:26482"/>
        <dbReference type="Rhea" id="RHEA-COMP:10162"/>
        <dbReference type="Rhea" id="RHEA-COMP:10375"/>
        <dbReference type="ChEBI" id="CHEBI:33019"/>
        <dbReference type="ChEBI" id="CHEBI:57623"/>
        <dbReference type="ChEBI" id="CHEBI:74411"/>
        <dbReference type="ChEBI" id="CHEBI:74415"/>
        <dbReference type="EC" id="2.5.1.75"/>
    </reaction>
</comment>
<comment type="cofactor">
    <cofactor evidence="1">
        <name>Mg(2+)</name>
        <dbReference type="ChEBI" id="CHEBI:18420"/>
    </cofactor>
</comment>
<comment type="subunit">
    <text evidence="1">Monomer.</text>
</comment>
<comment type="similarity">
    <text evidence="1">Belongs to the IPP transferase family.</text>
</comment>
<gene>
    <name evidence="1" type="primary">miaA</name>
    <name type="ordered locus">LBA1503</name>
</gene>
<reference key="1">
    <citation type="journal article" date="2005" name="Proc. Natl. Acad. Sci. U.S.A.">
        <title>Complete genome sequence of the probiotic lactic acid bacterium Lactobacillus acidophilus NCFM.</title>
        <authorList>
            <person name="Altermann E."/>
            <person name="Russell W.M."/>
            <person name="Azcarate-Peril M.A."/>
            <person name="Barrangou R."/>
            <person name="Buck B.L."/>
            <person name="McAuliffe O."/>
            <person name="Souther N."/>
            <person name="Dobson A."/>
            <person name="Duong T."/>
            <person name="Callanan M."/>
            <person name="Lick S."/>
            <person name="Hamrick A."/>
            <person name="Cano R."/>
            <person name="Klaenhammer T.R."/>
        </authorList>
    </citation>
    <scope>NUCLEOTIDE SEQUENCE [LARGE SCALE GENOMIC DNA]</scope>
    <source>
        <strain>ATCC 700396 / NCK56 / N2 / NCFM</strain>
    </source>
</reference>
<organism>
    <name type="scientific">Lactobacillus acidophilus (strain ATCC 700396 / NCK56 / N2 / NCFM)</name>
    <dbReference type="NCBI Taxonomy" id="272621"/>
    <lineage>
        <taxon>Bacteria</taxon>
        <taxon>Bacillati</taxon>
        <taxon>Bacillota</taxon>
        <taxon>Bacilli</taxon>
        <taxon>Lactobacillales</taxon>
        <taxon>Lactobacillaceae</taxon>
        <taxon>Lactobacillus</taxon>
    </lineage>
</organism>
<keyword id="KW-0067">ATP-binding</keyword>
<keyword id="KW-0460">Magnesium</keyword>
<keyword id="KW-0547">Nucleotide-binding</keyword>
<keyword id="KW-1185">Reference proteome</keyword>
<keyword id="KW-0808">Transferase</keyword>
<keyword id="KW-0819">tRNA processing</keyword>
<feature type="chain" id="PRO_1000020610" description="tRNA dimethylallyltransferase">
    <location>
        <begin position="1"/>
        <end position="306"/>
    </location>
</feature>
<feature type="region of interest" description="Interaction with substrate tRNA" evidence="1">
    <location>
        <begin position="34"/>
        <end position="37"/>
    </location>
</feature>
<feature type="binding site" evidence="1">
    <location>
        <begin position="9"/>
        <end position="16"/>
    </location>
    <ligand>
        <name>ATP</name>
        <dbReference type="ChEBI" id="CHEBI:30616"/>
    </ligand>
</feature>
<feature type="binding site" evidence="1">
    <location>
        <begin position="11"/>
        <end position="16"/>
    </location>
    <ligand>
        <name>substrate</name>
    </ligand>
</feature>
<feature type="site" description="Interaction with substrate tRNA" evidence="1">
    <location>
        <position position="100"/>
    </location>
</feature>
<evidence type="ECO:0000255" key="1">
    <source>
        <dbReference type="HAMAP-Rule" id="MF_00185"/>
    </source>
</evidence>
<accession>Q5FJ02</accession>
<name>MIAA_LACAC</name>
<protein>
    <recommendedName>
        <fullName evidence="1">tRNA dimethylallyltransferase</fullName>
        <ecNumber evidence="1">2.5.1.75</ecNumber>
    </recommendedName>
    <alternativeName>
        <fullName evidence="1">Dimethylallyl diphosphate:tRNA dimethylallyltransferase</fullName>
        <shortName evidence="1">DMAPP:tRNA dimethylallyltransferase</shortName>
        <shortName evidence="1">DMATase</shortName>
    </alternativeName>
    <alternativeName>
        <fullName evidence="1">Isopentenyl-diphosphate:tRNA isopentenyltransferase</fullName>
        <shortName evidence="1">IPP transferase</shortName>
        <shortName evidence="1">IPPT</shortName>
        <shortName evidence="1">IPTase</shortName>
    </alternativeName>
</protein>
<dbReference type="EC" id="2.5.1.75" evidence="1"/>
<dbReference type="EMBL" id="CP000033">
    <property type="protein sequence ID" value="AAV43322.1"/>
    <property type="molecule type" value="Genomic_DNA"/>
</dbReference>
<dbReference type="RefSeq" id="WP_003548247.1">
    <property type="nucleotide sequence ID" value="NC_006814.3"/>
</dbReference>
<dbReference type="RefSeq" id="YP_194353.1">
    <property type="nucleotide sequence ID" value="NC_006814.3"/>
</dbReference>
<dbReference type="SMR" id="Q5FJ02"/>
<dbReference type="STRING" id="272621.LBA1503"/>
<dbReference type="GeneID" id="93289428"/>
<dbReference type="KEGG" id="lac:LBA1503"/>
<dbReference type="PATRIC" id="fig|272621.13.peg.1425"/>
<dbReference type="eggNOG" id="COG0324">
    <property type="taxonomic scope" value="Bacteria"/>
</dbReference>
<dbReference type="HOGENOM" id="CLU_032616_0_1_9"/>
<dbReference type="OrthoDB" id="9776390at2"/>
<dbReference type="BioCyc" id="LACI272621:G1G49-1471-MONOMER"/>
<dbReference type="Proteomes" id="UP000006381">
    <property type="component" value="Chromosome"/>
</dbReference>
<dbReference type="GO" id="GO:0005524">
    <property type="term" value="F:ATP binding"/>
    <property type="evidence" value="ECO:0007669"/>
    <property type="project" value="UniProtKB-UniRule"/>
</dbReference>
<dbReference type="GO" id="GO:0052381">
    <property type="term" value="F:tRNA dimethylallyltransferase activity"/>
    <property type="evidence" value="ECO:0007669"/>
    <property type="project" value="UniProtKB-UniRule"/>
</dbReference>
<dbReference type="GO" id="GO:0006400">
    <property type="term" value="P:tRNA modification"/>
    <property type="evidence" value="ECO:0007669"/>
    <property type="project" value="TreeGrafter"/>
</dbReference>
<dbReference type="Gene3D" id="1.10.20.140">
    <property type="match status" value="1"/>
</dbReference>
<dbReference type="Gene3D" id="3.40.50.300">
    <property type="entry name" value="P-loop containing nucleotide triphosphate hydrolases"/>
    <property type="match status" value="1"/>
</dbReference>
<dbReference type="HAMAP" id="MF_00185">
    <property type="entry name" value="IPP_trans"/>
    <property type="match status" value="1"/>
</dbReference>
<dbReference type="InterPro" id="IPR039657">
    <property type="entry name" value="Dimethylallyltransferase"/>
</dbReference>
<dbReference type="InterPro" id="IPR018022">
    <property type="entry name" value="IPT"/>
</dbReference>
<dbReference type="InterPro" id="IPR027417">
    <property type="entry name" value="P-loop_NTPase"/>
</dbReference>
<dbReference type="NCBIfam" id="TIGR00174">
    <property type="entry name" value="miaA"/>
    <property type="match status" value="1"/>
</dbReference>
<dbReference type="PANTHER" id="PTHR11088">
    <property type="entry name" value="TRNA DIMETHYLALLYLTRANSFERASE"/>
    <property type="match status" value="1"/>
</dbReference>
<dbReference type="PANTHER" id="PTHR11088:SF60">
    <property type="entry name" value="TRNA DIMETHYLALLYLTRANSFERASE"/>
    <property type="match status" value="1"/>
</dbReference>
<dbReference type="Pfam" id="PF01715">
    <property type="entry name" value="IPPT"/>
    <property type="match status" value="1"/>
</dbReference>
<dbReference type="SUPFAM" id="SSF52540">
    <property type="entry name" value="P-loop containing nucleoside triphosphate hydrolases"/>
    <property type="match status" value="2"/>
</dbReference>